<evidence type="ECO:0000255" key="1"/>
<proteinExistence type="inferred from homology"/>
<gene>
    <name type="ordered locus">MJ1291</name>
</gene>
<sequence>MNKSGMSLIITMLLLIGTAIVIGAAYYAWSNKVFSDTTEKITPTIKSSIGNIIKPIEISTIETYYFTNLDLNGDSRITNNPEERFIQTIKLEFINNIDEDLNVNTRIYCLTPNVSWASVNIDDSSNNLLLDRDENPYNYSGQYVYFNGTVYYSSMKFYDENGKLFYAAASNGNALNTSNLLDLIDLNCPTESFLLKGNSKTDINYYILINNTKVPNTIIFEIIASTKYGDVEKKITFEIS</sequence>
<dbReference type="EMBL" id="L77117">
    <property type="protein sequence ID" value="AAB99297.1"/>
    <property type="molecule type" value="Genomic_DNA"/>
</dbReference>
<dbReference type="PIR" id="B64461">
    <property type="entry name" value="B64461"/>
</dbReference>
<dbReference type="RefSeq" id="WP_010870807.1">
    <property type="nucleotide sequence ID" value="NC_000909.1"/>
</dbReference>
<dbReference type="STRING" id="243232.MJ_1291"/>
<dbReference type="PaxDb" id="243232-MJ_1291"/>
<dbReference type="EnsemblBacteria" id="AAB99297">
    <property type="protein sequence ID" value="AAB99297"/>
    <property type="gene ID" value="MJ_1291"/>
</dbReference>
<dbReference type="GeneID" id="1452192"/>
<dbReference type="KEGG" id="mja:MJ_1291"/>
<dbReference type="eggNOG" id="arCOG05987">
    <property type="taxonomic scope" value="Archaea"/>
</dbReference>
<dbReference type="HOGENOM" id="CLU_1154366_0_0_2"/>
<dbReference type="InParanoid" id="Q58687"/>
<dbReference type="OrthoDB" id="65212at2157"/>
<dbReference type="Proteomes" id="UP000000805">
    <property type="component" value="Chromosome"/>
</dbReference>
<reference key="1">
    <citation type="journal article" date="1996" name="Science">
        <title>Complete genome sequence of the methanogenic archaeon, Methanococcus jannaschii.</title>
        <authorList>
            <person name="Bult C.J."/>
            <person name="White O."/>
            <person name="Olsen G.J."/>
            <person name="Zhou L."/>
            <person name="Fleischmann R.D."/>
            <person name="Sutton G.G."/>
            <person name="Blake J.A."/>
            <person name="FitzGerald L.M."/>
            <person name="Clayton R.A."/>
            <person name="Gocayne J.D."/>
            <person name="Kerlavage A.R."/>
            <person name="Dougherty B.A."/>
            <person name="Tomb J.-F."/>
            <person name="Adams M.D."/>
            <person name="Reich C.I."/>
            <person name="Overbeek R."/>
            <person name="Kirkness E.F."/>
            <person name="Weinstock K.G."/>
            <person name="Merrick J.M."/>
            <person name="Glodek A."/>
            <person name="Scott J.L."/>
            <person name="Geoghagen N.S.M."/>
            <person name="Weidman J.F."/>
            <person name="Fuhrmann J.L."/>
            <person name="Nguyen D."/>
            <person name="Utterback T.R."/>
            <person name="Kelley J.M."/>
            <person name="Peterson J.D."/>
            <person name="Sadow P.W."/>
            <person name="Hanna M.C."/>
            <person name="Cotton M.D."/>
            <person name="Roberts K.M."/>
            <person name="Hurst M.A."/>
            <person name="Kaine B.P."/>
            <person name="Borodovsky M."/>
            <person name="Klenk H.-P."/>
            <person name="Fraser C.M."/>
            <person name="Smith H.O."/>
            <person name="Woese C.R."/>
            <person name="Venter J.C."/>
        </authorList>
    </citation>
    <scope>NUCLEOTIDE SEQUENCE [LARGE SCALE GENOMIC DNA]</scope>
    <source>
        <strain>ATCC 43067 / DSM 2661 / JAL-1 / JCM 10045 / NBRC 100440</strain>
    </source>
</reference>
<name>Y1291_METJA</name>
<organism>
    <name type="scientific">Methanocaldococcus jannaschii (strain ATCC 43067 / DSM 2661 / JAL-1 / JCM 10045 / NBRC 100440)</name>
    <name type="common">Methanococcus jannaschii</name>
    <dbReference type="NCBI Taxonomy" id="243232"/>
    <lineage>
        <taxon>Archaea</taxon>
        <taxon>Methanobacteriati</taxon>
        <taxon>Methanobacteriota</taxon>
        <taxon>Methanomada group</taxon>
        <taxon>Methanococci</taxon>
        <taxon>Methanococcales</taxon>
        <taxon>Methanocaldococcaceae</taxon>
        <taxon>Methanocaldococcus</taxon>
    </lineage>
</organism>
<keyword id="KW-1185">Reference proteome</keyword>
<keyword id="KW-0732">Signal</keyword>
<protein>
    <recommendedName>
        <fullName>Uncharacterized protein MJ1291</fullName>
    </recommendedName>
</protein>
<accession>Q58687</accession>
<feature type="signal peptide" evidence="1">
    <location>
        <begin position="1"/>
        <end position="30"/>
    </location>
</feature>
<feature type="chain" id="PRO_0000014012" description="Uncharacterized protein MJ1291">
    <location>
        <begin position="31"/>
        <end position="240"/>
    </location>
</feature>